<dbReference type="EC" id="7.-.-.-" evidence="1"/>
<dbReference type="EMBL" id="CP000507">
    <property type="protein sequence ID" value="ABM00036.1"/>
    <property type="molecule type" value="Genomic_DNA"/>
</dbReference>
<dbReference type="RefSeq" id="WP_011759943.1">
    <property type="nucleotide sequence ID" value="NC_008700.1"/>
</dbReference>
<dbReference type="SMR" id="A1S6M9"/>
<dbReference type="STRING" id="326297.Sama_1830"/>
<dbReference type="KEGG" id="saz:Sama_1830"/>
<dbReference type="eggNOG" id="COG4657">
    <property type="taxonomic scope" value="Bacteria"/>
</dbReference>
<dbReference type="HOGENOM" id="CLU_095255_1_0_6"/>
<dbReference type="OrthoDB" id="9803631at2"/>
<dbReference type="Proteomes" id="UP000009175">
    <property type="component" value="Chromosome"/>
</dbReference>
<dbReference type="GO" id="GO:0005886">
    <property type="term" value="C:plasma membrane"/>
    <property type="evidence" value="ECO:0007669"/>
    <property type="project" value="UniProtKB-SubCell"/>
</dbReference>
<dbReference type="GO" id="GO:0022900">
    <property type="term" value="P:electron transport chain"/>
    <property type="evidence" value="ECO:0007669"/>
    <property type="project" value="UniProtKB-UniRule"/>
</dbReference>
<dbReference type="HAMAP" id="MF_00459">
    <property type="entry name" value="RsxA_RnfA"/>
    <property type="match status" value="1"/>
</dbReference>
<dbReference type="InterPro" id="IPR011293">
    <property type="entry name" value="Ion_transpt_RnfA/RsxA"/>
</dbReference>
<dbReference type="InterPro" id="IPR003667">
    <property type="entry name" value="NqrDE/RnfAE"/>
</dbReference>
<dbReference type="InterPro" id="IPR050133">
    <property type="entry name" value="NqrDE/RnfAE_oxidrdctase"/>
</dbReference>
<dbReference type="NCBIfam" id="NF003481">
    <property type="entry name" value="PRK05151.1"/>
    <property type="match status" value="1"/>
</dbReference>
<dbReference type="NCBIfam" id="TIGR01943">
    <property type="entry name" value="rnfA"/>
    <property type="match status" value="1"/>
</dbReference>
<dbReference type="PANTHER" id="PTHR30335">
    <property type="entry name" value="INTEGRAL MEMBRANE PROTEIN OF SOXR-REDUCING COMPLEX"/>
    <property type="match status" value="1"/>
</dbReference>
<dbReference type="PANTHER" id="PTHR30335:SF0">
    <property type="entry name" value="ION-TRANSLOCATING OXIDOREDUCTASE COMPLEX SUBUNIT A"/>
    <property type="match status" value="1"/>
</dbReference>
<dbReference type="Pfam" id="PF02508">
    <property type="entry name" value="Rnf-Nqr"/>
    <property type="match status" value="1"/>
</dbReference>
<dbReference type="PIRSF" id="PIRSF006102">
    <property type="entry name" value="NQR_DE"/>
    <property type="match status" value="1"/>
</dbReference>
<accession>A1S6M9</accession>
<name>RNFA_SHEAM</name>
<sequence length="192" mass="20646">MSEYLLLLIGTVLVNNFVLVKFLGLCPFMGVSGKLESAIGMSMATTFVLTLASVLSFLVNQYLLAPFDLTYLRTMSFILVIAVVVQFTEMLVQKTSASLHRALGIYLPLITTNCAVLGVALLNVNEQHDFLESAIYGFGAAVGFSLVLILFSAMRERLAAADVPMPFRGGAIAMITAGLMSLAFMGFTGLVK</sequence>
<organism>
    <name type="scientific">Shewanella amazonensis (strain ATCC BAA-1098 / SB2B)</name>
    <dbReference type="NCBI Taxonomy" id="326297"/>
    <lineage>
        <taxon>Bacteria</taxon>
        <taxon>Pseudomonadati</taxon>
        <taxon>Pseudomonadota</taxon>
        <taxon>Gammaproteobacteria</taxon>
        <taxon>Alteromonadales</taxon>
        <taxon>Shewanellaceae</taxon>
        <taxon>Shewanella</taxon>
    </lineage>
</organism>
<comment type="function">
    <text evidence="1">Part of a membrane-bound complex that couples electron transfer with translocation of ions across the membrane.</text>
</comment>
<comment type="subunit">
    <text evidence="1">The complex is composed of six subunits: RnfA, RnfB, RnfC, RnfD, RnfE and RnfG.</text>
</comment>
<comment type="subcellular location">
    <subcellularLocation>
        <location evidence="1">Cell inner membrane</location>
        <topology evidence="1">Multi-pass membrane protein</topology>
    </subcellularLocation>
</comment>
<comment type="similarity">
    <text evidence="1">Belongs to the NqrDE/RnfAE family.</text>
</comment>
<gene>
    <name evidence="1" type="primary">rnfA</name>
    <name type="ordered locus">Sama_1830</name>
</gene>
<protein>
    <recommendedName>
        <fullName evidence="1">Ion-translocating oxidoreductase complex subunit A</fullName>
        <ecNumber evidence="1">7.-.-.-</ecNumber>
    </recommendedName>
    <alternativeName>
        <fullName evidence="1">Rnf electron transport complex subunit A</fullName>
    </alternativeName>
</protein>
<keyword id="KW-0997">Cell inner membrane</keyword>
<keyword id="KW-1003">Cell membrane</keyword>
<keyword id="KW-0249">Electron transport</keyword>
<keyword id="KW-0472">Membrane</keyword>
<keyword id="KW-1185">Reference proteome</keyword>
<keyword id="KW-1278">Translocase</keyword>
<keyword id="KW-0812">Transmembrane</keyword>
<keyword id="KW-1133">Transmembrane helix</keyword>
<keyword id="KW-0813">Transport</keyword>
<reference key="1">
    <citation type="submission" date="2006-12" db="EMBL/GenBank/DDBJ databases">
        <title>Complete sequence of Shewanella amazonensis SB2B.</title>
        <authorList>
            <consortium name="US DOE Joint Genome Institute"/>
            <person name="Copeland A."/>
            <person name="Lucas S."/>
            <person name="Lapidus A."/>
            <person name="Barry K."/>
            <person name="Detter J.C."/>
            <person name="Glavina del Rio T."/>
            <person name="Hammon N."/>
            <person name="Israni S."/>
            <person name="Dalin E."/>
            <person name="Tice H."/>
            <person name="Pitluck S."/>
            <person name="Munk A.C."/>
            <person name="Brettin T."/>
            <person name="Bruce D."/>
            <person name="Han C."/>
            <person name="Tapia R."/>
            <person name="Gilna P."/>
            <person name="Schmutz J."/>
            <person name="Larimer F."/>
            <person name="Land M."/>
            <person name="Hauser L."/>
            <person name="Kyrpides N."/>
            <person name="Mikhailova N."/>
            <person name="Fredrickson J."/>
            <person name="Richardson P."/>
        </authorList>
    </citation>
    <scope>NUCLEOTIDE SEQUENCE [LARGE SCALE GENOMIC DNA]</scope>
    <source>
        <strain>ATCC BAA-1098 / SB2B</strain>
    </source>
</reference>
<proteinExistence type="inferred from homology"/>
<evidence type="ECO:0000255" key="1">
    <source>
        <dbReference type="HAMAP-Rule" id="MF_00459"/>
    </source>
</evidence>
<feature type="chain" id="PRO_1000013546" description="Ion-translocating oxidoreductase complex subunit A">
    <location>
        <begin position="1"/>
        <end position="192"/>
    </location>
</feature>
<feature type="transmembrane region" description="Helical" evidence="1">
    <location>
        <begin position="5"/>
        <end position="25"/>
    </location>
</feature>
<feature type="transmembrane region" description="Helical" evidence="1">
    <location>
        <begin position="39"/>
        <end position="59"/>
    </location>
</feature>
<feature type="transmembrane region" description="Helical" evidence="1">
    <location>
        <begin position="72"/>
        <end position="92"/>
    </location>
</feature>
<feature type="transmembrane region" description="Helical" evidence="1">
    <location>
        <begin position="102"/>
        <end position="122"/>
    </location>
</feature>
<feature type="transmembrane region" description="Helical" evidence="1">
    <location>
        <begin position="134"/>
        <end position="154"/>
    </location>
</feature>
<feature type="transmembrane region" description="Helical" evidence="1">
    <location>
        <begin position="171"/>
        <end position="191"/>
    </location>
</feature>